<reference key="1">
    <citation type="journal article" date="2007" name="Nat. Biotechnol.">
        <title>Comparative analysis of the complete genome sequence of the plant growth-promoting bacterium Bacillus amyloliquefaciens FZB42.</title>
        <authorList>
            <person name="Chen X.H."/>
            <person name="Koumoutsi A."/>
            <person name="Scholz R."/>
            <person name="Eisenreich A."/>
            <person name="Schneider K."/>
            <person name="Heinemeyer I."/>
            <person name="Morgenstern B."/>
            <person name="Voss B."/>
            <person name="Hess W.R."/>
            <person name="Reva O."/>
            <person name="Junge H."/>
            <person name="Voigt B."/>
            <person name="Jungblut P.R."/>
            <person name="Vater J."/>
            <person name="Suessmuth R."/>
            <person name="Liesegang H."/>
            <person name="Strittmatter A."/>
            <person name="Gottschalk G."/>
            <person name="Borriss R."/>
        </authorList>
    </citation>
    <scope>NUCLEOTIDE SEQUENCE [LARGE SCALE GENOMIC DNA]</scope>
    <source>
        <strain>DSM 23117 / BGSC 10A6 / LMG 26770 / FZB42</strain>
    </source>
</reference>
<gene>
    <name evidence="1" type="primary">adk</name>
    <name type="ordered locus">RBAM_001620</name>
</gene>
<keyword id="KW-0067">ATP-binding</keyword>
<keyword id="KW-0963">Cytoplasm</keyword>
<keyword id="KW-0418">Kinase</keyword>
<keyword id="KW-0479">Metal-binding</keyword>
<keyword id="KW-0545">Nucleotide biosynthesis</keyword>
<keyword id="KW-0547">Nucleotide-binding</keyword>
<keyword id="KW-0808">Transferase</keyword>
<keyword id="KW-0862">Zinc</keyword>
<sequence length="217" mass="24107">MNLVLMGLPGAGKGTQGERIVEDYGIPHISTGDMFRAAMKEETPLGLEAKSYIDKGELVPDEVTIGIVKERLGKDDCERGFLLDGFPRTVAQAEALENILEEYGKPIDYVINIKVDKDSLMERLTGRRICSVCGTTYHLVFNPPKTPGVCDKDGGDLYQRADDNEETVSKRLEVNMKQTQPLLDFYSEKGYLVNVNGQQDINDVYKDVKELLGGLSK</sequence>
<evidence type="ECO:0000255" key="1">
    <source>
        <dbReference type="HAMAP-Rule" id="MF_00235"/>
    </source>
</evidence>
<name>KAD_BACVZ</name>
<comment type="function">
    <text evidence="1">Catalyzes the reversible transfer of the terminal phosphate group between ATP and AMP. Plays an important role in cellular energy homeostasis and in adenine nucleotide metabolism.</text>
</comment>
<comment type="catalytic activity">
    <reaction evidence="1">
        <text>AMP + ATP = 2 ADP</text>
        <dbReference type="Rhea" id="RHEA:12973"/>
        <dbReference type="ChEBI" id="CHEBI:30616"/>
        <dbReference type="ChEBI" id="CHEBI:456215"/>
        <dbReference type="ChEBI" id="CHEBI:456216"/>
        <dbReference type="EC" id="2.7.4.3"/>
    </reaction>
</comment>
<comment type="pathway">
    <text evidence="1">Purine metabolism; AMP biosynthesis via salvage pathway; AMP from ADP: step 1/1.</text>
</comment>
<comment type="subunit">
    <text evidence="1">Monomer.</text>
</comment>
<comment type="subcellular location">
    <subcellularLocation>
        <location evidence="1">Cytoplasm</location>
    </subcellularLocation>
</comment>
<comment type="domain">
    <text evidence="1">Consists of three domains, a large central CORE domain and two small peripheral domains, NMPbind and LID, which undergo movements during catalysis. The LID domain closes over the site of phosphoryl transfer upon ATP binding. Assembling and dissambling the active center during each catalytic cycle provides an effective means to prevent ATP hydrolysis. Some bacteria have evolved a zinc-coordinating structure that stabilizes the LID domain.</text>
</comment>
<comment type="similarity">
    <text evidence="1">Belongs to the adenylate kinase family.</text>
</comment>
<dbReference type="EC" id="2.7.4.3" evidence="1"/>
<dbReference type="EMBL" id="CP000560">
    <property type="protein sequence ID" value="ABS72585.1"/>
    <property type="molecule type" value="Genomic_DNA"/>
</dbReference>
<dbReference type="RefSeq" id="WP_007410407.1">
    <property type="nucleotide sequence ID" value="NC_009725.2"/>
</dbReference>
<dbReference type="SMR" id="A7Z0Q9"/>
<dbReference type="GeneID" id="93079301"/>
<dbReference type="KEGG" id="bay:RBAM_001620"/>
<dbReference type="HOGENOM" id="CLU_032354_1_2_9"/>
<dbReference type="UniPathway" id="UPA00588">
    <property type="reaction ID" value="UER00649"/>
</dbReference>
<dbReference type="Proteomes" id="UP000001120">
    <property type="component" value="Chromosome"/>
</dbReference>
<dbReference type="GO" id="GO:0005737">
    <property type="term" value="C:cytoplasm"/>
    <property type="evidence" value="ECO:0007669"/>
    <property type="project" value="UniProtKB-SubCell"/>
</dbReference>
<dbReference type="GO" id="GO:0004017">
    <property type="term" value="F:adenylate kinase activity"/>
    <property type="evidence" value="ECO:0007669"/>
    <property type="project" value="UniProtKB-UniRule"/>
</dbReference>
<dbReference type="GO" id="GO:0005524">
    <property type="term" value="F:ATP binding"/>
    <property type="evidence" value="ECO:0007669"/>
    <property type="project" value="UniProtKB-UniRule"/>
</dbReference>
<dbReference type="GO" id="GO:0008270">
    <property type="term" value="F:zinc ion binding"/>
    <property type="evidence" value="ECO:0007669"/>
    <property type="project" value="UniProtKB-UniRule"/>
</dbReference>
<dbReference type="GO" id="GO:0044209">
    <property type="term" value="P:AMP salvage"/>
    <property type="evidence" value="ECO:0007669"/>
    <property type="project" value="UniProtKB-UniRule"/>
</dbReference>
<dbReference type="CDD" id="cd01428">
    <property type="entry name" value="ADK"/>
    <property type="match status" value="1"/>
</dbReference>
<dbReference type="FunFam" id="3.40.50.300:FF:000106">
    <property type="entry name" value="Adenylate kinase mitochondrial"/>
    <property type="match status" value="1"/>
</dbReference>
<dbReference type="Gene3D" id="3.40.50.300">
    <property type="entry name" value="P-loop containing nucleotide triphosphate hydrolases"/>
    <property type="match status" value="1"/>
</dbReference>
<dbReference type="HAMAP" id="MF_00235">
    <property type="entry name" value="Adenylate_kinase_Adk"/>
    <property type="match status" value="1"/>
</dbReference>
<dbReference type="InterPro" id="IPR006259">
    <property type="entry name" value="Adenyl_kin_sub"/>
</dbReference>
<dbReference type="InterPro" id="IPR000850">
    <property type="entry name" value="Adenylat/UMP-CMP_kin"/>
</dbReference>
<dbReference type="InterPro" id="IPR033690">
    <property type="entry name" value="Adenylat_kinase_CS"/>
</dbReference>
<dbReference type="InterPro" id="IPR007862">
    <property type="entry name" value="Adenylate_kinase_lid-dom"/>
</dbReference>
<dbReference type="InterPro" id="IPR027417">
    <property type="entry name" value="P-loop_NTPase"/>
</dbReference>
<dbReference type="NCBIfam" id="TIGR01351">
    <property type="entry name" value="adk"/>
    <property type="match status" value="1"/>
</dbReference>
<dbReference type="NCBIfam" id="NF001380">
    <property type="entry name" value="PRK00279.1-2"/>
    <property type="match status" value="1"/>
</dbReference>
<dbReference type="NCBIfam" id="NF001381">
    <property type="entry name" value="PRK00279.1-3"/>
    <property type="match status" value="1"/>
</dbReference>
<dbReference type="NCBIfam" id="NF011100">
    <property type="entry name" value="PRK14527.1"/>
    <property type="match status" value="1"/>
</dbReference>
<dbReference type="PANTHER" id="PTHR23359">
    <property type="entry name" value="NUCLEOTIDE KINASE"/>
    <property type="match status" value="1"/>
</dbReference>
<dbReference type="Pfam" id="PF00406">
    <property type="entry name" value="ADK"/>
    <property type="match status" value="1"/>
</dbReference>
<dbReference type="Pfam" id="PF05191">
    <property type="entry name" value="ADK_lid"/>
    <property type="match status" value="1"/>
</dbReference>
<dbReference type="PRINTS" id="PR00094">
    <property type="entry name" value="ADENYLTKNASE"/>
</dbReference>
<dbReference type="SUPFAM" id="SSF52540">
    <property type="entry name" value="P-loop containing nucleoside triphosphate hydrolases"/>
    <property type="match status" value="1"/>
</dbReference>
<dbReference type="PROSITE" id="PS00113">
    <property type="entry name" value="ADENYLATE_KINASE"/>
    <property type="match status" value="1"/>
</dbReference>
<feature type="chain" id="PRO_1000021710" description="Adenylate kinase">
    <location>
        <begin position="1"/>
        <end position="217"/>
    </location>
</feature>
<feature type="region of interest" description="NMP" evidence="1">
    <location>
        <begin position="30"/>
        <end position="59"/>
    </location>
</feature>
<feature type="region of interest" description="LID" evidence="1">
    <location>
        <begin position="126"/>
        <end position="163"/>
    </location>
</feature>
<feature type="binding site" evidence="1">
    <location>
        <begin position="10"/>
        <end position="15"/>
    </location>
    <ligand>
        <name>ATP</name>
        <dbReference type="ChEBI" id="CHEBI:30616"/>
    </ligand>
</feature>
<feature type="binding site" evidence="1">
    <location>
        <position position="31"/>
    </location>
    <ligand>
        <name>AMP</name>
        <dbReference type="ChEBI" id="CHEBI:456215"/>
    </ligand>
</feature>
<feature type="binding site" evidence="1">
    <location>
        <position position="36"/>
    </location>
    <ligand>
        <name>AMP</name>
        <dbReference type="ChEBI" id="CHEBI:456215"/>
    </ligand>
</feature>
<feature type="binding site" evidence="1">
    <location>
        <begin position="57"/>
        <end position="59"/>
    </location>
    <ligand>
        <name>AMP</name>
        <dbReference type="ChEBI" id="CHEBI:456215"/>
    </ligand>
</feature>
<feature type="binding site" evidence="1">
    <location>
        <begin position="85"/>
        <end position="88"/>
    </location>
    <ligand>
        <name>AMP</name>
        <dbReference type="ChEBI" id="CHEBI:456215"/>
    </ligand>
</feature>
<feature type="binding site" evidence="1">
    <location>
        <position position="92"/>
    </location>
    <ligand>
        <name>AMP</name>
        <dbReference type="ChEBI" id="CHEBI:456215"/>
    </ligand>
</feature>
<feature type="binding site" evidence="1">
    <location>
        <position position="127"/>
    </location>
    <ligand>
        <name>ATP</name>
        <dbReference type="ChEBI" id="CHEBI:30616"/>
    </ligand>
</feature>
<feature type="binding site" evidence="1">
    <location>
        <position position="130"/>
    </location>
    <ligand>
        <name>Zn(2+)</name>
        <dbReference type="ChEBI" id="CHEBI:29105"/>
        <note>structural</note>
    </ligand>
</feature>
<feature type="binding site" evidence="1">
    <location>
        <position position="133"/>
    </location>
    <ligand>
        <name>Zn(2+)</name>
        <dbReference type="ChEBI" id="CHEBI:29105"/>
        <note>structural</note>
    </ligand>
</feature>
<feature type="binding site" evidence="1">
    <location>
        <begin position="136"/>
        <end position="137"/>
    </location>
    <ligand>
        <name>ATP</name>
        <dbReference type="ChEBI" id="CHEBI:30616"/>
    </ligand>
</feature>
<feature type="binding site" evidence="1">
    <location>
        <position position="150"/>
    </location>
    <ligand>
        <name>Zn(2+)</name>
        <dbReference type="ChEBI" id="CHEBI:29105"/>
        <note>structural</note>
    </ligand>
</feature>
<feature type="binding site" evidence="1">
    <location>
        <position position="153"/>
    </location>
    <ligand>
        <name>Zn(2+)</name>
        <dbReference type="ChEBI" id="CHEBI:29105"/>
        <note>structural</note>
    </ligand>
</feature>
<feature type="binding site" evidence="1">
    <location>
        <position position="160"/>
    </location>
    <ligand>
        <name>AMP</name>
        <dbReference type="ChEBI" id="CHEBI:456215"/>
    </ligand>
</feature>
<feature type="binding site" evidence="1">
    <location>
        <position position="171"/>
    </location>
    <ligand>
        <name>AMP</name>
        <dbReference type="ChEBI" id="CHEBI:456215"/>
    </ligand>
</feature>
<feature type="binding site" evidence="1">
    <location>
        <position position="199"/>
    </location>
    <ligand>
        <name>ATP</name>
        <dbReference type="ChEBI" id="CHEBI:30616"/>
    </ligand>
</feature>
<proteinExistence type="inferred from homology"/>
<accession>A7Z0Q9</accession>
<organism>
    <name type="scientific">Bacillus velezensis (strain DSM 23117 / BGSC 10A6 / LMG 26770 / FZB42)</name>
    <name type="common">Bacillus amyloliquefaciens subsp. plantarum</name>
    <dbReference type="NCBI Taxonomy" id="326423"/>
    <lineage>
        <taxon>Bacteria</taxon>
        <taxon>Bacillati</taxon>
        <taxon>Bacillota</taxon>
        <taxon>Bacilli</taxon>
        <taxon>Bacillales</taxon>
        <taxon>Bacillaceae</taxon>
        <taxon>Bacillus</taxon>
        <taxon>Bacillus amyloliquefaciens group</taxon>
    </lineage>
</organism>
<protein>
    <recommendedName>
        <fullName evidence="1">Adenylate kinase</fullName>
        <shortName evidence="1">AK</shortName>
        <ecNumber evidence="1">2.7.4.3</ecNumber>
    </recommendedName>
    <alternativeName>
        <fullName evidence="1">ATP-AMP transphosphorylase</fullName>
    </alternativeName>
    <alternativeName>
        <fullName evidence="1">ATP:AMP phosphotransferase</fullName>
    </alternativeName>
    <alternativeName>
        <fullName evidence="1">Adenylate monophosphate kinase</fullName>
    </alternativeName>
</protein>